<gene>
    <name type="primary">rpl22</name>
</gene>
<organism>
    <name type="scientific">Anthoceros angustus</name>
    <name type="common">Hornwort</name>
    <name type="synonym">Anthoceros formosae</name>
    <dbReference type="NCBI Taxonomy" id="48387"/>
    <lineage>
        <taxon>Eukaryota</taxon>
        <taxon>Viridiplantae</taxon>
        <taxon>Streptophyta</taxon>
        <taxon>Embryophyta</taxon>
        <taxon>Anthocerotophyta</taxon>
        <taxon>Anthocerotopsida</taxon>
        <taxon>Anthocerotidae</taxon>
        <taxon>Anthocerotales</taxon>
        <taxon>Anthocerotaceae</taxon>
        <taxon>Anthoceros</taxon>
    </lineage>
</organism>
<comment type="function">
    <text evidence="1">This protein binds specifically to 23S rRNA.</text>
</comment>
<comment type="function">
    <text evidence="1">The globular domain of the protein is located near the polypeptide exit tunnel on the outside of the subunit, while an extended beta-hairpin is found that lines the wall of the exit tunnel in the center of the 70S ribosome.</text>
</comment>
<comment type="subunit">
    <text evidence="1">Part of the 50S ribosomal subunit.</text>
</comment>
<comment type="subcellular location">
    <subcellularLocation>
        <location>Plastid</location>
        <location>Chloroplast</location>
    </subcellularLocation>
</comment>
<comment type="RNA editing">
    <location>
        <position position="60" evidence="2 3"/>
    </location>
</comment>
<comment type="similarity">
    <text evidence="4">Belongs to the universal ribosomal protein uL22 family.</text>
</comment>
<feature type="chain" id="PRO_0000125295" description="Large ribosomal subunit protein uL22c">
    <location>
        <begin position="1"/>
        <end position="119"/>
    </location>
</feature>
<proteinExistence type="evidence at transcript level"/>
<name>RK22_ANTAG</name>
<reference key="1">
    <citation type="journal article" date="2003" name="Nucleic Acids Res.">
        <title>The complete nucleotide sequence of the hornwort (Anthoceros formosae) chloroplast genome: insight into the earliest land plants.</title>
        <authorList>
            <person name="Kugita M."/>
            <person name="Kaneko A."/>
            <person name="Yamamoto Y."/>
            <person name="Takeya Y."/>
            <person name="Matsumoto T."/>
            <person name="Yoshinaga K."/>
        </authorList>
    </citation>
    <scope>NUCLEOTIDE SEQUENCE [LARGE SCALE GENOMIC DNA]</scope>
    <scope>RNA EDITING</scope>
</reference>
<reference key="2">
    <citation type="journal article" date="2003" name="Nucleic Acids Res.">
        <title>RNA editing in hornwort chloroplasts makes more than half the genes functional.</title>
        <authorList>
            <person name="Kugita M."/>
            <person name="Yamamoto Y."/>
            <person name="Fujikawa T."/>
            <person name="Matsumoto T."/>
            <person name="Yoshinaga K."/>
        </authorList>
    </citation>
    <scope>NUCLEOTIDE SEQUENCE [MRNA]</scope>
    <scope>RNA EDITING</scope>
    <source>
        <tissue>Thallus</tissue>
    </source>
</reference>
<accession>Q85CH6</accession>
<geneLocation type="chloroplast"/>
<dbReference type="EMBL" id="AB086179">
    <property type="protein sequence ID" value="BAC55389.1"/>
    <property type="molecule type" value="Genomic_DNA"/>
</dbReference>
<dbReference type="EMBL" id="AB087472">
    <property type="protein sequence ID" value="BAC55488.1"/>
    <property type="molecule type" value="mRNA"/>
</dbReference>
<dbReference type="RefSeq" id="NP_777453.1">
    <property type="nucleotide sequence ID" value="NC_004543.1"/>
</dbReference>
<dbReference type="SMR" id="Q85CH6"/>
<dbReference type="GeneID" id="2553417"/>
<dbReference type="GO" id="GO:0009507">
    <property type="term" value="C:chloroplast"/>
    <property type="evidence" value="ECO:0007669"/>
    <property type="project" value="UniProtKB-SubCell"/>
</dbReference>
<dbReference type="GO" id="GO:0015934">
    <property type="term" value="C:large ribosomal subunit"/>
    <property type="evidence" value="ECO:0007669"/>
    <property type="project" value="InterPro"/>
</dbReference>
<dbReference type="GO" id="GO:0019843">
    <property type="term" value="F:rRNA binding"/>
    <property type="evidence" value="ECO:0007669"/>
    <property type="project" value="UniProtKB-UniRule"/>
</dbReference>
<dbReference type="GO" id="GO:0003735">
    <property type="term" value="F:structural constituent of ribosome"/>
    <property type="evidence" value="ECO:0007669"/>
    <property type="project" value="InterPro"/>
</dbReference>
<dbReference type="GO" id="GO:0006412">
    <property type="term" value="P:translation"/>
    <property type="evidence" value="ECO:0007669"/>
    <property type="project" value="UniProtKB-UniRule"/>
</dbReference>
<dbReference type="CDD" id="cd00336">
    <property type="entry name" value="Ribosomal_L22"/>
    <property type="match status" value="1"/>
</dbReference>
<dbReference type="Gene3D" id="3.90.470.10">
    <property type="entry name" value="Ribosomal protein L22/L17"/>
    <property type="match status" value="1"/>
</dbReference>
<dbReference type="HAMAP" id="MF_01331_B">
    <property type="entry name" value="Ribosomal_uL22_B"/>
    <property type="match status" value="1"/>
</dbReference>
<dbReference type="InterPro" id="IPR001063">
    <property type="entry name" value="Ribosomal_uL22"/>
</dbReference>
<dbReference type="InterPro" id="IPR005727">
    <property type="entry name" value="Ribosomal_uL22_bac/chlpt-type"/>
</dbReference>
<dbReference type="InterPro" id="IPR047867">
    <property type="entry name" value="Ribosomal_uL22_bac/org-type"/>
</dbReference>
<dbReference type="InterPro" id="IPR018260">
    <property type="entry name" value="Ribosomal_uL22_CS"/>
</dbReference>
<dbReference type="InterPro" id="IPR036394">
    <property type="entry name" value="Ribosomal_uL22_sf"/>
</dbReference>
<dbReference type="NCBIfam" id="TIGR01044">
    <property type="entry name" value="rplV_bact"/>
    <property type="match status" value="1"/>
</dbReference>
<dbReference type="PANTHER" id="PTHR13501">
    <property type="entry name" value="CHLOROPLAST 50S RIBOSOMAL PROTEIN L22-RELATED"/>
    <property type="match status" value="1"/>
</dbReference>
<dbReference type="PANTHER" id="PTHR13501:SF10">
    <property type="entry name" value="LARGE RIBOSOMAL SUBUNIT PROTEIN UL22M"/>
    <property type="match status" value="1"/>
</dbReference>
<dbReference type="Pfam" id="PF00237">
    <property type="entry name" value="Ribosomal_L22"/>
    <property type="match status" value="1"/>
</dbReference>
<dbReference type="SUPFAM" id="SSF54843">
    <property type="entry name" value="Ribosomal protein L22"/>
    <property type="match status" value="1"/>
</dbReference>
<dbReference type="PROSITE" id="PS00464">
    <property type="entry name" value="RIBOSOMAL_L22"/>
    <property type="match status" value="1"/>
</dbReference>
<keyword id="KW-0150">Chloroplast</keyword>
<keyword id="KW-0934">Plastid</keyword>
<keyword id="KW-0687">Ribonucleoprotein</keyword>
<keyword id="KW-0689">Ribosomal protein</keyword>
<keyword id="KW-0691">RNA editing</keyword>
<keyword id="KW-0694">RNA-binding</keyword>
<keyword id="KW-0699">rRNA-binding</keyword>
<sequence length="119" mass="13412">MKTNYSNLETQALAKHIRISASKVRRVINEIRGRLYEQAPMILEFMLYRACYPVSQLLSLAAANASHNLGLNKADSVTSEVKVDEGTMLKRFEPRAQGRGYPIHKPTSHITIVIKKKST</sequence>
<protein>
    <recommendedName>
        <fullName evidence="4">Large ribosomal subunit protein uL22c</fullName>
    </recommendedName>
    <alternativeName>
        <fullName>50S ribosomal protein L22, chloroplastic</fullName>
    </alternativeName>
</protein>
<evidence type="ECO:0000250" key="1"/>
<evidence type="ECO:0000269" key="2">
    <source>
    </source>
</evidence>
<evidence type="ECO:0000269" key="3">
    <source>
    </source>
</evidence>
<evidence type="ECO:0000305" key="4"/>